<reference key="1">
    <citation type="journal article" date="2006" name="Mol. Microbiol.">
        <title>Role of pathogenicity island-associated integrases in the genome plasticity of uropathogenic Escherichia coli strain 536.</title>
        <authorList>
            <person name="Hochhut B."/>
            <person name="Wilde C."/>
            <person name="Balling G."/>
            <person name="Middendorf B."/>
            <person name="Dobrindt U."/>
            <person name="Brzuszkiewicz E."/>
            <person name="Gottschalk G."/>
            <person name="Carniel E."/>
            <person name="Hacker J."/>
        </authorList>
    </citation>
    <scope>NUCLEOTIDE SEQUENCE [LARGE SCALE GENOMIC DNA]</scope>
    <source>
        <strain>536 / UPEC</strain>
    </source>
</reference>
<sequence>MFKPHVTVACVVHAEGKFLVVEETINGKALWNQPAGHLEADETLVEAAARELWEETGISAQPQHFIRMHQWIAPDKTPFLRFLFAIELEQICPTQPHDSDIDCCRWVSAEEILQASNLRSPLVAESIRCYQSGQRYPLEMIGDFNWPFTKGVI</sequence>
<organism>
    <name type="scientific">Escherichia coli O6:K15:H31 (strain 536 / UPEC)</name>
    <dbReference type="NCBI Taxonomy" id="362663"/>
    <lineage>
        <taxon>Bacteria</taxon>
        <taxon>Pseudomonadati</taxon>
        <taxon>Pseudomonadota</taxon>
        <taxon>Gammaproteobacteria</taxon>
        <taxon>Enterobacterales</taxon>
        <taxon>Enterobacteriaceae</taxon>
        <taxon>Escherichia</taxon>
    </lineage>
</organism>
<name>NUDJ_ECOL5</name>
<gene>
    <name type="primary">nudJ</name>
    <name type="ordered locus">ECP_1129</name>
</gene>
<dbReference type="EC" id="3.6.1.-"/>
<dbReference type="EMBL" id="CP000247">
    <property type="protein sequence ID" value="ABG69140.1"/>
    <property type="molecule type" value="Genomic_DNA"/>
</dbReference>
<dbReference type="RefSeq" id="WP_000476093.1">
    <property type="nucleotide sequence ID" value="NC_008253.1"/>
</dbReference>
<dbReference type="SMR" id="Q0TIT9"/>
<dbReference type="GeneID" id="75203720"/>
<dbReference type="KEGG" id="ecp:ECP_1129"/>
<dbReference type="HOGENOM" id="CLU_037162_6_1_6"/>
<dbReference type="Proteomes" id="UP000009182">
    <property type="component" value="Chromosome"/>
</dbReference>
<dbReference type="GO" id="GO:0017110">
    <property type="term" value="F:nucleoside diphosphate phosphatase activity"/>
    <property type="evidence" value="ECO:0007669"/>
    <property type="project" value="InterPro"/>
</dbReference>
<dbReference type="GO" id="GO:0017111">
    <property type="term" value="F:ribonucleoside triphosphate phosphatase activity"/>
    <property type="evidence" value="ECO:0007669"/>
    <property type="project" value="InterPro"/>
</dbReference>
<dbReference type="GO" id="GO:0004787">
    <property type="term" value="F:thiamine diphosphate phosphatase activity"/>
    <property type="evidence" value="ECO:0007669"/>
    <property type="project" value="InterPro"/>
</dbReference>
<dbReference type="CDD" id="cd03675">
    <property type="entry name" value="NUDIX_Hydrolase"/>
    <property type="match status" value="1"/>
</dbReference>
<dbReference type="FunFam" id="3.90.79.10:FF:000017">
    <property type="entry name" value="Phosphatase NudJ"/>
    <property type="match status" value="1"/>
</dbReference>
<dbReference type="Gene3D" id="3.90.79.10">
    <property type="entry name" value="Nucleoside Triphosphate Pyrophosphohydrolase"/>
    <property type="match status" value="1"/>
</dbReference>
<dbReference type="InterPro" id="IPR020476">
    <property type="entry name" value="Nudix_hydrolase"/>
</dbReference>
<dbReference type="InterPro" id="IPR015797">
    <property type="entry name" value="NUDIX_hydrolase-like_dom_sf"/>
</dbReference>
<dbReference type="InterPro" id="IPR020084">
    <property type="entry name" value="NUDIX_hydrolase_CS"/>
</dbReference>
<dbReference type="InterPro" id="IPR000086">
    <property type="entry name" value="NUDIX_hydrolase_dom"/>
</dbReference>
<dbReference type="InterPro" id="IPR033713">
    <property type="entry name" value="NudJ"/>
</dbReference>
<dbReference type="PANTHER" id="PTHR43222">
    <property type="entry name" value="NUDIX HYDROLASE 23"/>
    <property type="match status" value="1"/>
</dbReference>
<dbReference type="PANTHER" id="PTHR43222:SF11">
    <property type="entry name" value="PHOSPHATASE NUDJ"/>
    <property type="match status" value="1"/>
</dbReference>
<dbReference type="Pfam" id="PF00293">
    <property type="entry name" value="NUDIX"/>
    <property type="match status" value="1"/>
</dbReference>
<dbReference type="PRINTS" id="PR00502">
    <property type="entry name" value="NUDIXFAMILY"/>
</dbReference>
<dbReference type="SUPFAM" id="SSF55811">
    <property type="entry name" value="Nudix"/>
    <property type="match status" value="1"/>
</dbReference>
<dbReference type="PROSITE" id="PS51462">
    <property type="entry name" value="NUDIX"/>
    <property type="match status" value="1"/>
</dbReference>
<dbReference type="PROSITE" id="PS00893">
    <property type="entry name" value="NUDIX_BOX"/>
    <property type="match status" value="1"/>
</dbReference>
<protein>
    <recommendedName>
        <fullName>Phosphatase NudJ</fullName>
        <ecNumber>3.6.1.-</ecNumber>
    </recommendedName>
</protein>
<accession>Q0TIT9</accession>
<comment type="cofactor">
    <cofactor evidence="1">
        <name>Mg(2+)</name>
        <dbReference type="ChEBI" id="CHEBI:18420"/>
    </cofactor>
</comment>
<comment type="subunit">
    <text evidence="1">Monomer.</text>
</comment>
<comment type="similarity">
    <text evidence="3">Belongs to the Nudix hydrolase family. NudJ subfamily.</text>
</comment>
<feature type="chain" id="PRO_0000342643" description="Phosphatase NudJ">
    <location>
        <begin position="1"/>
        <end position="153"/>
    </location>
</feature>
<feature type="domain" description="Nudix hydrolase" evidence="2">
    <location>
        <begin position="3"/>
        <end position="131"/>
    </location>
</feature>
<feature type="short sequence motif" description="Nudix box">
    <location>
        <begin position="36"/>
        <end position="57"/>
    </location>
</feature>
<proteinExistence type="inferred from homology"/>
<keyword id="KW-0378">Hydrolase</keyword>
<keyword id="KW-0460">Magnesium</keyword>
<evidence type="ECO:0000250" key="1"/>
<evidence type="ECO:0000255" key="2">
    <source>
        <dbReference type="PROSITE-ProRule" id="PRU00794"/>
    </source>
</evidence>
<evidence type="ECO:0000305" key="3"/>